<organismHost>
    <name type="scientific">Ornithodoros</name>
    <name type="common">relapsing fever ticks</name>
    <dbReference type="NCBI Taxonomy" id="6937"/>
</organismHost>
<organismHost>
    <name type="scientific">Phacochoerus aethiopicus</name>
    <name type="common">Warthog</name>
    <dbReference type="NCBI Taxonomy" id="85517"/>
</organismHost>
<organismHost>
    <name type="scientific">Phacochoerus africanus</name>
    <name type="common">Warthog</name>
    <dbReference type="NCBI Taxonomy" id="41426"/>
</organismHost>
<organismHost>
    <name type="scientific">Potamochoerus larvatus</name>
    <name type="common">Bushpig</name>
    <dbReference type="NCBI Taxonomy" id="273792"/>
</organismHost>
<organismHost>
    <name type="scientific">Sus scrofa</name>
    <name type="common">Pig</name>
    <dbReference type="NCBI Taxonomy" id="9823"/>
</organismHost>
<feature type="chain" id="PRO_0000373369" description="Putative membrane protein 164">
    <location>
        <begin position="1"/>
        <end position="166"/>
    </location>
</feature>
<feature type="topological domain" description="Intravirion" evidence="2">
    <location>
        <begin position="1"/>
        <end position="4"/>
    </location>
</feature>
<feature type="transmembrane region" description="Helical" evidence="2">
    <location>
        <begin position="5"/>
        <end position="25"/>
    </location>
</feature>
<feature type="topological domain" description="Virion surface" evidence="2">
    <location>
        <begin position="26"/>
        <end position="166"/>
    </location>
</feature>
<dbReference type="EMBL" id="AY261360">
    <property type="status" value="NOT_ANNOTATED_CDS"/>
    <property type="molecule type" value="Genomic_DNA"/>
</dbReference>
<dbReference type="Proteomes" id="UP000000861">
    <property type="component" value="Segment"/>
</dbReference>
<dbReference type="GO" id="GO:0020002">
    <property type="term" value="C:host cell plasma membrane"/>
    <property type="evidence" value="ECO:0007669"/>
    <property type="project" value="UniProtKB-SubCell"/>
</dbReference>
<dbReference type="GO" id="GO:0016020">
    <property type="term" value="C:membrane"/>
    <property type="evidence" value="ECO:0007669"/>
    <property type="project" value="UniProtKB-KW"/>
</dbReference>
<dbReference type="GO" id="GO:0055036">
    <property type="term" value="C:virion membrane"/>
    <property type="evidence" value="ECO:0007669"/>
    <property type="project" value="UniProtKB-SubCell"/>
</dbReference>
<dbReference type="Gene3D" id="3.50.4.10">
    <property type="entry name" value="Hepatocyte Growth Factor"/>
    <property type="match status" value="1"/>
</dbReference>
<dbReference type="InterPro" id="IPR003609">
    <property type="entry name" value="Pan_app"/>
</dbReference>
<dbReference type="Pfam" id="PF00024">
    <property type="entry name" value="PAN_1"/>
    <property type="match status" value="1"/>
</dbReference>
<proteinExistence type="evidence at transcript level"/>
<accession>P0C9W5</accession>
<comment type="subcellular location">
    <subcellularLocation>
        <location>Virion membrane</location>
        <topology>Single-pass membrane protein</topology>
    </subcellularLocation>
    <subcellularLocation>
        <location evidence="1">Host cell membrane</location>
        <topology evidence="1">Single-pass membrane protein</topology>
    </subcellularLocation>
</comment>
<comment type="induction">
    <text>Early structural protein.</text>
</comment>
<comment type="similarity">
    <text evidence="3">Belongs to the asfivirus envelope protein p22 family.</text>
</comment>
<keyword id="KW-0244">Early protein</keyword>
<keyword id="KW-1032">Host cell membrane</keyword>
<keyword id="KW-1043">Host membrane</keyword>
<keyword id="KW-0472">Membrane</keyword>
<keyword id="KW-0812">Transmembrane</keyword>
<keyword id="KW-1133">Transmembrane helix</keyword>
<keyword id="KW-0946">Virion</keyword>
<gene>
    <name type="ordered locus">Ken-164</name>
</gene>
<protein>
    <recommendedName>
        <fullName>Putative membrane protein 164</fullName>
    </recommendedName>
</protein>
<reference key="1">
    <citation type="submission" date="2003-03" db="EMBL/GenBank/DDBJ databases">
        <title>African swine fever virus genomes.</title>
        <authorList>
            <person name="Kutish G.F."/>
            <person name="Rock D.L."/>
        </authorList>
    </citation>
    <scope>NUCLEOTIDE SEQUENCE [LARGE SCALE GENOMIC DNA]</scope>
</reference>
<organism>
    <name type="scientific">African swine fever virus (isolate Pig/Kenya/KEN-50/1950)</name>
    <name type="common">ASFV</name>
    <dbReference type="NCBI Taxonomy" id="561445"/>
    <lineage>
        <taxon>Viruses</taxon>
        <taxon>Varidnaviria</taxon>
        <taxon>Bamfordvirae</taxon>
        <taxon>Nucleocytoviricota</taxon>
        <taxon>Pokkesviricetes</taxon>
        <taxon>Asfuvirales</taxon>
        <taxon>Asfarviridae</taxon>
        <taxon>Asfivirus</taxon>
        <taxon>African swine fever virus</taxon>
    </lineage>
</organism>
<name>EV164_ASFK5</name>
<sequence>MYHPVVQVLIGLILVIILILGFYHLKKKSCKTDTDCKDNGHHCVRGTCTDISCLEAVKQDIKGINLDPSIRSCNYTPGFYTFNSTTADLQSPFGKTRIYYGDVYATWSSVDYCQSLCLQHNGCIAWEFDDEKESPGQGSCYFYTNSHPALKNSNDTTIMGIARNIL</sequence>
<evidence type="ECO:0000250" key="1"/>
<evidence type="ECO:0000255" key="2"/>
<evidence type="ECO:0000305" key="3"/>